<keyword id="KW-0963">Cytoplasm</keyword>
<keyword id="KW-0227">DNA damage</keyword>
<keyword id="KW-0228">DNA excision</keyword>
<keyword id="KW-0234">DNA repair</keyword>
<keyword id="KW-0238">DNA-binding</keyword>
<keyword id="KW-0378">Hydrolase</keyword>
<reference key="1">
    <citation type="journal article" date="2011" name="J. Bacteriol.">
        <title>Comparative genomics of 28 Salmonella enterica isolates: evidence for CRISPR-mediated adaptive sublineage evolution.</title>
        <authorList>
            <person name="Fricke W.F."/>
            <person name="Mammel M.K."/>
            <person name="McDermott P.F."/>
            <person name="Tartera C."/>
            <person name="White D.G."/>
            <person name="Leclerc J.E."/>
            <person name="Ravel J."/>
            <person name="Cebula T.A."/>
        </authorList>
    </citation>
    <scope>NUCLEOTIDE SEQUENCE [LARGE SCALE GENOMIC DNA]</scope>
    <source>
        <strain>SL483</strain>
    </source>
</reference>
<comment type="function">
    <text evidence="1">Excises ethenocytosine and uracil, which can arise by alkylation or deamination of cytosine, respectively, from the corresponding mispairs with guanine in ds-DNA. It is capable of hydrolyzing the carbon-nitrogen bond between the sugar-phosphate backbone of the DNA and the mispaired base. The complementary strand guanine functions in substrate recognition. Required for DNA damage lesion repair in stationary-phase cells.</text>
</comment>
<comment type="catalytic activity">
    <reaction evidence="1">
        <text>Specifically hydrolyzes mismatched double-stranded DNA and polynucleotides, releasing free uracil.</text>
        <dbReference type="EC" id="3.2.2.28"/>
    </reaction>
</comment>
<comment type="subunit">
    <text evidence="1">Binds DNA as a monomer.</text>
</comment>
<comment type="subcellular location">
    <subcellularLocation>
        <location evidence="1">Cytoplasm</location>
    </subcellularLocation>
</comment>
<comment type="similarity">
    <text evidence="1">Belongs to the uracil-DNA glycosylase (UDG) superfamily. TDG/mug family.</text>
</comment>
<proteinExistence type="inferred from homology"/>
<protein>
    <recommendedName>
        <fullName evidence="1">G/U mismatch-specific DNA glycosylase</fullName>
        <ecNumber evidence="1">3.2.2.28</ecNumber>
    </recommendedName>
    <alternativeName>
        <fullName evidence="1">Double-strand-specific uracil glycosylase</fullName>
    </alternativeName>
    <alternativeName>
        <fullName evidence="1">Mismatch-specific uracil DNA-glycosylase</fullName>
        <shortName evidence="1">MUG</shortName>
    </alternativeName>
</protein>
<feature type="chain" id="PRO_1000188962" description="G/U mismatch-specific DNA glycosylase">
    <location>
        <begin position="1"/>
        <end position="168"/>
    </location>
</feature>
<evidence type="ECO:0000255" key="1">
    <source>
        <dbReference type="HAMAP-Rule" id="MF_01956"/>
    </source>
</evidence>
<organism>
    <name type="scientific">Salmonella agona (strain SL483)</name>
    <dbReference type="NCBI Taxonomy" id="454166"/>
    <lineage>
        <taxon>Bacteria</taxon>
        <taxon>Pseudomonadati</taxon>
        <taxon>Pseudomonadota</taxon>
        <taxon>Gammaproteobacteria</taxon>
        <taxon>Enterobacterales</taxon>
        <taxon>Enterobacteriaceae</taxon>
        <taxon>Salmonella</taxon>
    </lineage>
</organism>
<gene>
    <name evidence="1" type="primary">mug</name>
    <name type="ordered locus">SeAg_B3398</name>
</gene>
<name>MUG_SALA4</name>
<sequence length="168" mass="18650">MVKDILAPGLRVVFCGINPGLSSANTGFPFAHPANRFWKVIHLAGFTDRQLKPEEAEKLLDFRCGVTKLVDRPTVQATEVKLHELRSGGRNLIEKIEDYQPAALAVLGKQAFEQGFSQRGIAWGKQKIAIGATMVWVLPNPSGLNRIKTEKLVEAYRELDQALIMRGL</sequence>
<accession>B5F6A8</accession>
<dbReference type="EC" id="3.2.2.28" evidence="1"/>
<dbReference type="EMBL" id="CP001138">
    <property type="protein sequence ID" value="ACH51878.1"/>
    <property type="molecule type" value="Genomic_DNA"/>
</dbReference>
<dbReference type="RefSeq" id="WP_000237776.1">
    <property type="nucleotide sequence ID" value="NC_011149.1"/>
</dbReference>
<dbReference type="SMR" id="B5F6A8"/>
<dbReference type="KEGG" id="sea:SeAg_B3398"/>
<dbReference type="HOGENOM" id="CLU_042829_3_1_6"/>
<dbReference type="Proteomes" id="UP000008819">
    <property type="component" value="Chromosome"/>
</dbReference>
<dbReference type="GO" id="GO:0005737">
    <property type="term" value="C:cytoplasm"/>
    <property type="evidence" value="ECO:0007669"/>
    <property type="project" value="UniProtKB-SubCell"/>
</dbReference>
<dbReference type="GO" id="GO:0003677">
    <property type="term" value="F:DNA binding"/>
    <property type="evidence" value="ECO:0007669"/>
    <property type="project" value="UniProtKB-KW"/>
</dbReference>
<dbReference type="GO" id="GO:0008263">
    <property type="term" value="F:pyrimidine-specific mismatch base pair DNA N-glycosylase activity"/>
    <property type="evidence" value="ECO:0007669"/>
    <property type="project" value="UniProtKB-UniRule"/>
</dbReference>
<dbReference type="GO" id="GO:0004844">
    <property type="term" value="F:uracil DNA N-glycosylase activity"/>
    <property type="evidence" value="ECO:0007669"/>
    <property type="project" value="TreeGrafter"/>
</dbReference>
<dbReference type="GO" id="GO:0006285">
    <property type="term" value="P:base-excision repair, AP site formation"/>
    <property type="evidence" value="ECO:0007669"/>
    <property type="project" value="UniProtKB-UniRule"/>
</dbReference>
<dbReference type="CDD" id="cd10028">
    <property type="entry name" value="UDG-F2_TDG_MUG"/>
    <property type="match status" value="1"/>
</dbReference>
<dbReference type="Gene3D" id="3.40.470.10">
    <property type="entry name" value="Uracil-DNA glycosylase-like domain"/>
    <property type="match status" value="1"/>
</dbReference>
<dbReference type="HAMAP" id="MF_01956">
    <property type="entry name" value="MUG"/>
    <property type="match status" value="1"/>
</dbReference>
<dbReference type="InterPro" id="IPR015637">
    <property type="entry name" value="MUG/TDG"/>
</dbReference>
<dbReference type="InterPro" id="IPR023502">
    <property type="entry name" value="MUG_bact"/>
</dbReference>
<dbReference type="InterPro" id="IPR005122">
    <property type="entry name" value="Uracil-DNA_glycosylase-like"/>
</dbReference>
<dbReference type="InterPro" id="IPR036895">
    <property type="entry name" value="Uracil-DNA_glycosylase-like_sf"/>
</dbReference>
<dbReference type="NCBIfam" id="NF007570">
    <property type="entry name" value="PRK10201.1"/>
    <property type="match status" value="1"/>
</dbReference>
<dbReference type="PANTHER" id="PTHR12159">
    <property type="entry name" value="G/T AND G/U MISMATCH-SPECIFIC DNA GLYCOSYLASE"/>
    <property type="match status" value="1"/>
</dbReference>
<dbReference type="PANTHER" id="PTHR12159:SF9">
    <property type="entry name" value="G_T MISMATCH-SPECIFIC THYMINE DNA GLYCOSYLASE"/>
    <property type="match status" value="1"/>
</dbReference>
<dbReference type="Pfam" id="PF03167">
    <property type="entry name" value="UDG"/>
    <property type="match status" value="1"/>
</dbReference>
<dbReference type="SUPFAM" id="SSF52141">
    <property type="entry name" value="Uracil-DNA glycosylase-like"/>
    <property type="match status" value="1"/>
</dbReference>